<comment type="function">
    <text evidence="1">DNA ligase that catalyzes the formation of phosphodiester linkages between 5'-phosphoryl and 3'-hydroxyl groups in double-stranded DNA using NAD as a coenzyme and as the energy source for the reaction. It is essential for DNA replication and repair of damaged DNA.</text>
</comment>
<comment type="catalytic activity">
    <reaction evidence="1">
        <text>NAD(+) + (deoxyribonucleotide)n-3'-hydroxyl + 5'-phospho-(deoxyribonucleotide)m = (deoxyribonucleotide)n+m + AMP + beta-nicotinamide D-nucleotide.</text>
        <dbReference type="EC" id="6.5.1.2"/>
    </reaction>
</comment>
<comment type="cofactor">
    <cofactor evidence="1">
        <name>Mg(2+)</name>
        <dbReference type="ChEBI" id="CHEBI:18420"/>
    </cofactor>
    <cofactor evidence="1">
        <name>Mn(2+)</name>
        <dbReference type="ChEBI" id="CHEBI:29035"/>
    </cofactor>
</comment>
<comment type="similarity">
    <text evidence="1">Belongs to the NAD-dependent DNA ligase family. LigA subfamily.</text>
</comment>
<organism>
    <name type="scientific">Azorhizobium caulinodans (strain ATCC 43989 / DSM 5975 / JCM 20966 / LMG 6465 / NBRC 14845 / NCIMB 13405 / ORS 571)</name>
    <dbReference type="NCBI Taxonomy" id="438753"/>
    <lineage>
        <taxon>Bacteria</taxon>
        <taxon>Pseudomonadati</taxon>
        <taxon>Pseudomonadota</taxon>
        <taxon>Alphaproteobacteria</taxon>
        <taxon>Hyphomicrobiales</taxon>
        <taxon>Xanthobacteraceae</taxon>
        <taxon>Azorhizobium</taxon>
    </lineage>
</organism>
<protein>
    <recommendedName>
        <fullName evidence="1">DNA ligase</fullName>
        <ecNumber evidence="1">6.5.1.2</ecNumber>
    </recommendedName>
    <alternativeName>
        <fullName evidence="1">Polydeoxyribonucleotide synthase [NAD(+)]</fullName>
    </alternativeName>
</protein>
<feature type="chain" id="PRO_0000340326" description="DNA ligase">
    <location>
        <begin position="1"/>
        <end position="739"/>
    </location>
</feature>
<feature type="domain" description="BRCT" evidence="1">
    <location>
        <begin position="662"/>
        <end position="739"/>
    </location>
</feature>
<feature type="region of interest" description="Disordered" evidence="2">
    <location>
        <begin position="1"/>
        <end position="29"/>
    </location>
</feature>
<feature type="region of interest" description="Disordered" evidence="2">
    <location>
        <begin position="592"/>
        <end position="612"/>
    </location>
</feature>
<feature type="active site" description="N6-AMP-lysine intermediate" evidence="1">
    <location>
        <position position="136"/>
    </location>
</feature>
<feature type="binding site" evidence="1">
    <location>
        <begin position="51"/>
        <end position="55"/>
    </location>
    <ligand>
        <name>NAD(+)</name>
        <dbReference type="ChEBI" id="CHEBI:57540"/>
    </ligand>
</feature>
<feature type="binding site" evidence="1">
    <location>
        <begin position="100"/>
        <end position="101"/>
    </location>
    <ligand>
        <name>NAD(+)</name>
        <dbReference type="ChEBI" id="CHEBI:57540"/>
    </ligand>
</feature>
<feature type="binding site" evidence="1">
    <location>
        <position position="134"/>
    </location>
    <ligand>
        <name>NAD(+)</name>
        <dbReference type="ChEBI" id="CHEBI:57540"/>
    </ligand>
</feature>
<feature type="binding site" evidence="1">
    <location>
        <position position="157"/>
    </location>
    <ligand>
        <name>NAD(+)</name>
        <dbReference type="ChEBI" id="CHEBI:57540"/>
    </ligand>
</feature>
<feature type="binding site" evidence="1">
    <location>
        <position position="194"/>
    </location>
    <ligand>
        <name>NAD(+)</name>
        <dbReference type="ChEBI" id="CHEBI:57540"/>
    </ligand>
</feature>
<feature type="binding site" evidence="1">
    <location>
        <position position="311"/>
    </location>
    <ligand>
        <name>NAD(+)</name>
        <dbReference type="ChEBI" id="CHEBI:57540"/>
    </ligand>
</feature>
<feature type="binding site" evidence="1">
    <location>
        <position position="335"/>
    </location>
    <ligand>
        <name>NAD(+)</name>
        <dbReference type="ChEBI" id="CHEBI:57540"/>
    </ligand>
</feature>
<feature type="binding site" evidence="1">
    <location>
        <position position="440"/>
    </location>
    <ligand>
        <name>Zn(2+)</name>
        <dbReference type="ChEBI" id="CHEBI:29105"/>
    </ligand>
</feature>
<feature type="binding site" evidence="1">
    <location>
        <position position="443"/>
    </location>
    <ligand>
        <name>Zn(2+)</name>
        <dbReference type="ChEBI" id="CHEBI:29105"/>
    </ligand>
</feature>
<feature type="binding site" evidence="1">
    <location>
        <position position="464"/>
    </location>
    <ligand>
        <name>Zn(2+)</name>
        <dbReference type="ChEBI" id="CHEBI:29105"/>
    </ligand>
</feature>
<feature type="binding site" evidence="1">
    <location>
        <position position="470"/>
    </location>
    <ligand>
        <name>Zn(2+)</name>
        <dbReference type="ChEBI" id="CHEBI:29105"/>
    </ligand>
</feature>
<keyword id="KW-0227">DNA damage</keyword>
<keyword id="KW-0234">DNA repair</keyword>
<keyword id="KW-0235">DNA replication</keyword>
<keyword id="KW-0436">Ligase</keyword>
<keyword id="KW-0460">Magnesium</keyword>
<keyword id="KW-0464">Manganese</keyword>
<keyword id="KW-0479">Metal-binding</keyword>
<keyword id="KW-0520">NAD</keyword>
<keyword id="KW-1185">Reference proteome</keyword>
<keyword id="KW-0862">Zinc</keyword>
<accession>A8IGY0</accession>
<evidence type="ECO:0000255" key="1">
    <source>
        <dbReference type="HAMAP-Rule" id="MF_01588"/>
    </source>
</evidence>
<evidence type="ECO:0000256" key="2">
    <source>
        <dbReference type="SAM" id="MobiDB-lite"/>
    </source>
</evidence>
<gene>
    <name evidence="1" type="primary">ligA</name>
    <name type="ordered locus">AZC_0149</name>
</gene>
<name>DNLJ_AZOC5</name>
<proteinExistence type="inferred from homology"/>
<reference key="1">
    <citation type="submission" date="2007-04" db="EMBL/GenBank/DDBJ databases">
        <title>Complete genome sequence of the nitrogen-fixing bacterium Azorhizobium caulinodans ORS571.</title>
        <authorList>
            <person name="Lee K.B."/>
            <person name="Backer P.D."/>
            <person name="Aono T."/>
            <person name="Liu C.T."/>
            <person name="Suzuki S."/>
            <person name="Suzuki T."/>
            <person name="Kaneko T."/>
            <person name="Yamada M."/>
            <person name="Tabata S."/>
            <person name="Kupfer D.M."/>
            <person name="Najar F.Z."/>
            <person name="Wiley G.B."/>
            <person name="Roe B."/>
            <person name="Binnewies T."/>
            <person name="Ussery D."/>
            <person name="Vereecke D."/>
            <person name="Gevers D."/>
            <person name="Holsters M."/>
            <person name="Oyaizu H."/>
        </authorList>
    </citation>
    <scope>NUCLEOTIDE SEQUENCE [LARGE SCALE GENOMIC DNA]</scope>
    <source>
        <strain>ATCC 43989 / DSM 5975 / JCM 20966 / LMG 6465 / NBRC 14845 / NCIMB 13405 / ORS 571</strain>
    </source>
</reference>
<sequence length="739" mass="80556">MTANRPALPTRDKAVSDLSATEASDEHAALSQEIASHDARYYQEDAPVISDADYDRLRRRYEDIEARFPALKNDDSLSRKVGAAPSAKFAKVVHQVPMLSLQNAFSDEEVEEFVARVRRFLNLAESAELAFTAEPKIDGLSCSLRYEGGVLVRAATRGDGTQGEDVTANVRTIAEIPHRLTGAGVPDIIDIRGEVYMGKADFLALNARQEEAGKPVFANPRNAAAGSLRQLDPEITRSRPLRFFAYAWGQAEPGPPGASQHEVVDAFRRFGLPTNPLTIRVTDAAGLLAHYRKIGAERASLGYDIDGVVYKVDSLALQERLGFVSRSPRWAIAHKFAAEQATTVIEAIEIQVGRTGALTPVAKLTPVTVGGVVVSNATLHNEDYIRAIGGNGEEIREGIDIRVGDTVVVQRAGDVIPQVVSVVLDKRPAGATAYQFPHHCPVCNSQAVREVDPKTGKQDAVRRCTGGLICPAQAVERLRHFVSRNAFDIEGLGEKQAHAFYEWKLIAEPADIFRLQARNEQSLSKLENREGWGRTSAQNLFAAIEARRTIALDRFIFALGIRHVGETNAKRLARHYGSVEALRDAAIGAEMPTEMEEASEETPPTRRRKPQGNEVWQEMTDIDGIGAVVAEAVVEFFREPHNRQVVEELLKEVTPQPLEAVASTSPVSGKTVVFTGSLERMTRDEAKAMAERLGAKVAGSVSGKTDLLVAGPGAGSKLEKARSLGVKTITEDEWFDLVG</sequence>
<dbReference type="EC" id="6.5.1.2" evidence="1"/>
<dbReference type="EMBL" id="AP009384">
    <property type="protein sequence ID" value="BAF86147.1"/>
    <property type="molecule type" value="Genomic_DNA"/>
</dbReference>
<dbReference type="RefSeq" id="WP_012168680.1">
    <property type="nucleotide sequence ID" value="NC_009937.1"/>
</dbReference>
<dbReference type="SMR" id="A8IGY0"/>
<dbReference type="STRING" id="438753.AZC_0149"/>
<dbReference type="KEGG" id="azc:AZC_0149"/>
<dbReference type="eggNOG" id="COG0272">
    <property type="taxonomic scope" value="Bacteria"/>
</dbReference>
<dbReference type="HOGENOM" id="CLU_007764_2_1_5"/>
<dbReference type="Proteomes" id="UP000000270">
    <property type="component" value="Chromosome"/>
</dbReference>
<dbReference type="GO" id="GO:0005829">
    <property type="term" value="C:cytosol"/>
    <property type="evidence" value="ECO:0007669"/>
    <property type="project" value="TreeGrafter"/>
</dbReference>
<dbReference type="GO" id="GO:0003911">
    <property type="term" value="F:DNA ligase (NAD+) activity"/>
    <property type="evidence" value="ECO:0007669"/>
    <property type="project" value="UniProtKB-UniRule"/>
</dbReference>
<dbReference type="GO" id="GO:0046872">
    <property type="term" value="F:metal ion binding"/>
    <property type="evidence" value="ECO:0007669"/>
    <property type="project" value="UniProtKB-KW"/>
</dbReference>
<dbReference type="GO" id="GO:0006281">
    <property type="term" value="P:DNA repair"/>
    <property type="evidence" value="ECO:0007669"/>
    <property type="project" value="UniProtKB-KW"/>
</dbReference>
<dbReference type="GO" id="GO:0006260">
    <property type="term" value="P:DNA replication"/>
    <property type="evidence" value="ECO:0007669"/>
    <property type="project" value="UniProtKB-KW"/>
</dbReference>
<dbReference type="CDD" id="cd17748">
    <property type="entry name" value="BRCT_DNA_ligase_like"/>
    <property type="match status" value="1"/>
</dbReference>
<dbReference type="CDD" id="cd00114">
    <property type="entry name" value="LIGANc"/>
    <property type="match status" value="1"/>
</dbReference>
<dbReference type="FunFam" id="1.10.150.20:FF:000007">
    <property type="entry name" value="DNA ligase"/>
    <property type="match status" value="1"/>
</dbReference>
<dbReference type="FunFam" id="3.30.470.30:FF:000001">
    <property type="entry name" value="DNA ligase"/>
    <property type="match status" value="1"/>
</dbReference>
<dbReference type="Gene3D" id="6.20.10.30">
    <property type="match status" value="1"/>
</dbReference>
<dbReference type="Gene3D" id="1.10.150.20">
    <property type="entry name" value="5' to 3' exonuclease, C-terminal subdomain"/>
    <property type="match status" value="2"/>
</dbReference>
<dbReference type="Gene3D" id="3.40.50.10190">
    <property type="entry name" value="BRCT domain"/>
    <property type="match status" value="1"/>
</dbReference>
<dbReference type="Gene3D" id="3.30.470.30">
    <property type="entry name" value="DNA ligase/mRNA capping enzyme"/>
    <property type="match status" value="1"/>
</dbReference>
<dbReference type="Gene3D" id="1.10.287.610">
    <property type="entry name" value="Helix hairpin bin"/>
    <property type="match status" value="1"/>
</dbReference>
<dbReference type="Gene3D" id="2.40.50.140">
    <property type="entry name" value="Nucleic acid-binding proteins"/>
    <property type="match status" value="1"/>
</dbReference>
<dbReference type="HAMAP" id="MF_01588">
    <property type="entry name" value="DNA_ligase_A"/>
    <property type="match status" value="1"/>
</dbReference>
<dbReference type="InterPro" id="IPR001357">
    <property type="entry name" value="BRCT_dom"/>
</dbReference>
<dbReference type="InterPro" id="IPR036420">
    <property type="entry name" value="BRCT_dom_sf"/>
</dbReference>
<dbReference type="InterPro" id="IPR041663">
    <property type="entry name" value="DisA/LigA_HHH"/>
</dbReference>
<dbReference type="InterPro" id="IPR001679">
    <property type="entry name" value="DNA_ligase"/>
</dbReference>
<dbReference type="InterPro" id="IPR018239">
    <property type="entry name" value="DNA_ligase_AS"/>
</dbReference>
<dbReference type="InterPro" id="IPR033136">
    <property type="entry name" value="DNA_ligase_CS"/>
</dbReference>
<dbReference type="InterPro" id="IPR013839">
    <property type="entry name" value="DNAligase_adenylation"/>
</dbReference>
<dbReference type="InterPro" id="IPR013840">
    <property type="entry name" value="DNAligase_N"/>
</dbReference>
<dbReference type="InterPro" id="IPR012340">
    <property type="entry name" value="NA-bd_OB-fold"/>
</dbReference>
<dbReference type="InterPro" id="IPR004150">
    <property type="entry name" value="NAD_DNA_ligase_OB"/>
</dbReference>
<dbReference type="InterPro" id="IPR010994">
    <property type="entry name" value="RuvA_2-like"/>
</dbReference>
<dbReference type="InterPro" id="IPR004149">
    <property type="entry name" value="Znf_DNAligase_C4"/>
</dbReference>
<dbReference type="NCBIfam" id="TIGR00575">
    <property type="entry name" value="dnlj"/>
    <property type="match status" value="1"/>
</dbReference>
<dbReference type="NCBIfam" id="NF005932">
    <property type="entry name" value="PRK07956.1"/>
    <property type="match status" value="1"/>
</dbReference>
<dbReference type="PANTHER" id="PTHR23389">
    <property type="entry name" value="CHROMOSOME TRANSMISSION FIDELITY FACTOR 18"/>
    <property type="match status" value="1"/>
</dbReference>
<dbReference type="PANTHER" id="PTHR23389:SF9">
    <property type="entry name" value="DNA LIGASE"/>
    <property type="match status" value="1"/>
</dbReference>
<dbReference type="Pfam" id="PF00533">
    <property type="entry name" value="BRCT"/>
    <property type="match status" value="1"/>
</dbReference>
<dbReference type="Pfam" id="PF01653">
    <property type="entry name" value="DNA_ligase_aden"/>
    <property type="match status" value="1"/>
</dbReference>
<dbReference type="Pfam" id="PF03120">
    <property type="entry name" value="DNA_ligase_OB"/>
    <property type="match status" value="1"/>
</dbReference>
<dbReference type="Pfam" id="PF03119">
    <property type="entry name" value="DNA_ligase_ZBD"/>
    <property type="match status" value="1"/>
</dbReference>
<dbReference type="Pfam" id="PF12826">
    <property type="entry name" value="HHH_2"/>
    <property type="match status" value="1"/>
</dbReference>
<dbReference type="PIRSF" id="PIRSF001604">
    <property type="entry name" value="LigA"/>
    <property type="match status" value="1"/>
</dbReference>
<dbReference type="SMART" id="SM00292">
    <property type="entry name" value="BRCT"/>
    <property type="match status" value="1"/>
</dbReference>
<dbReference type="SMART" id="SM00532">
    <property type="entry name" value="LIGANc"/>
    <property type="match status" value="1"/>
</dbReference>
<dbReference type="SUPFAM" id="SSF52113">
    <property type="entry name" value="BRCT domain"/>
    <property type="match status" value="1"/>
</dbReference>
<dbReference type="SUPFAM" id="SSF56091">
    <property type="entry name" value="DNA ligase/mRNA capping enzyme, catalytic domain"/>
    <property type="match status" value="1"/>
</dbReference>
<dbReference type="SUPFAM" id="SSF50249">
    <property type="entry name" value="Nucleic acid-binding proteins"/>
    <property type="match status" value="1"/>
</dbReference>
<dbReference type="SUPFAM" id="SSF47781">
    <property type="entry name" value="RuvA domain 2-like"/>
    <property type="match status" value="1"/>
</dbReference>
<dbReference type="PROSITE" id="PS50172">
    <property type="entry name" value="BRCT"/>
    <property type="match status" value="1"/>
</dbReference>
<dbReference type="PROSITE" id="PS01055">
    <property type="entry name" value="DNA_LIGASE_N1"/>
    <property type="match status" value="1"/>
</dbReference>
<dbReference type="PROSITE" id="PS01056">
    <property type="entry name" value="DNA_LIGASE_N2"/>
    <property type="match status" value="1"/>
</dbReference>